<feature type="chain" id="PRO_0000427786" description="Molybdopterin synthase catalytic subunit 2">
    <location>
        <begin position="1"/>
        <end position="141"/>
    </location>
</feature>
<feature type="binding site" evidence="1">
    <location>
        <begin position="37"/>
        <end position="39"/>
    </location>
    <ligand>
        <name>substrate</name>
    </ligand>
</feature>
<feature type="binding site" evidence="1">
    <location>
        <begin position="103"/>
        <end position="104"/>
    </location>
    <ligand>
        <name>substrate</name>
    </ligand>
</feature>
<feature type="binding site" evidence="1">
    <location>
        <position position="119"/>
    </location>
    <ligand>
        <name>substrate</name>
    </ligand>
</feature>
<feature type="binding site" evidence="1">
    <location>
        <begin position="126"/>
        <end position="128"/>
    </location>
    <ligand>
        <name>substrate</name>
    </ligand>
</feature>
<sequence length="141" mass="15048">MTQVLRAALTDQPIFLAEHEELVSHRSAGAIVGFVGMIRDRDGGRGVLRLEYSAHPSAAQVLADLVAEVAEESSGVRAVAASHRIGVLQVGEAALVAAVAADHRRAAFGTCAHLVETIKARLPVWKHQFFEDGTDEWVGSV</sequence>
<protein>
    <recommendedName>
        <fullName>Molybdopterin synthase catalytic subunit 2</fullName>
        <ecNumber>2.8.1.12</ecNumber>
    </recommendedName>
    <alternativeName>
        <fullName>MPT synthase subunit 2 2</fullName>
    </alternativeName>
    <alternativeName>
        <fullName>Molybdenum cofactor biosynthesis protein E 2</fullName>
    </alternativeName>
    <alternativeName>
        <fullName>Molybdopterin-converting factor large subunit 2</fullName>
    </alternativeName>
    <alternativeName>
        <fullName>Molybdopterin-converting factor subunit 2 2</fullName>
    </alternativeName>
</protein>
<organism>
    <name type="scientific">Mycobacterium tuberculosis (strain CDC 1551 / Oshkosh)</name>
    <dbReference type="NCBI Taxonomy" id="83331"/>
    <lineage>
        <taxon>Bacteria</taxon>
        <taxon>Bacillati</taxon>
        <taxon>Actinomycetota</taxon>
        <taxon>Actinomycetes</taxon>
        <taxon>Mycobacteriales</taxon>
        <taxon>Mycobacteriaceae</taxon>
        <taxon>Mycobacterium</taxon>
        <taxon>Mycobacterium tuberculosis complex</taxon>
    </lineage>
</organism>
<keyword id="KW-0501">Molybdenum cofactor biosynthesis</keyword>
<keyword id="KW-1185">Reference proteome</keyword>
<keyword id="KW-0808">Transferase</keyword>
<gene>
    <name type="primary">moaE2</name>
    <name type="ordered locus">MT0889</name>
</gene>
<dbReference type="EC" id="2.8.1.12"/>
<dbReference type="EMBL" id="AE000516">
    <property type="protein sequence ID" value="AAK45130.1"/>
    <property type="molecule type" value="Genomic_DNA"/>
</dbReference>
<dbReference type="PIR" id="B70816">
    <property type="entry name" value="B70816"/>
</dbReference>
<dbReference type="RefSeq" id="WP_003404552.1">
    <property type="nucleotide sequence ID" value="NZ_KK341227.1"/>
</dbReference>
<dbReference type="SMR" id="P9WJR0"/>
<dbReference type="GeneID" id="45424832"/>
<dbReference type="KEGG" id="mtc:MT0889"/>
<dbReference type="PATRIC" id="fig|83331.31.peg.954"/>
<dbReference type="HOGENOM" id="CLU_089568_1_1_11"/>
<dbReference type="UniPathway" id="UPA00344"/>
<dbReference type="Proteomes" id="UP000001020">
    <property type="component" value="Chromosome"/>
</dbReference>
<dbReference type="GO" id="GO:0030366">
    <property type="term" value="F:molybdopterin synthase activity"/>
    <property type="evidence" value="ECO:0007669"/>
    <property type="project" value="UniProtKB-EC"/>
</dbReference>
<dbReference type="GO" id="GO:0006777">
    <property type="term" value="P:Mo-molybdopterin cofactor biosynthetic process"/>
    <property type="evidence" value="ECO:0007669"/>
    <property type="project" value="UniProtKB-KW"/>
</dbReference>
<dbReference type="CDD" id="cd00756">
    <property type="entry name" value="MoaE"/>
    <property type="match status" value="1"/>
</dbReference>
<dbReference type="Gene3D" id="3.90.1170.40">
    <property type="entry name" value="Molybdopterin biosynthesis MoaE subunit"/>
    <property type="match status" value="1"/>
</dbReference>
<dbReference type="InterPro" id="IPR036563">
    <property type="entry name" value="MoaE_sf"/>
</dbReference>
<dbReference type="InterPro" id="IPR003448">
    <property type="entry name" value="Mopterin_biosynth_MoaE"/>
</dbReference>
<dbReference type="PANTHER" id="PTHR23404">
    <property type="entry name" value="MOLYBDOPTERIN SYNTHASE RELATED"/>
    <property type="match status" value="1"/>
</dbReference>
<dbReference type="Pfam" id="PF02391">
    <property type="entry name" value="MoaE"/>
    <property type="match status" value="1"/>
</dbReference>
<dbReference type="SUPFAM" id="SSF54690">
    <property type="entry name" value="Molybdopterin synthase subunit MoaE"/>
    <property type="match status" value="1"/>
</dbReference>
<accession>P9WJR0</accession>
<accession>L0T6N7</accession>
<accession>O53878</accession>
<comment type="function">
    <text evidence="1">Converts molybdopterin precursor Z into molybdopterin. This requires the incorporation of two sulfur atoms into precursor Z to generate a dithiolene group. The sulfur is provided by MoaD (By similarity).</text>
</comment>
<comment type="catalytic activity">
    <reaction>
        <text>2 [molybdopterin-synthase sulfur-carrier protein]-C-terminal-Gly-aminoethanethioate + cyclic pyranopterin phosphate + H2O = molybdopterin + 2 [molybdopterin-synthase sulfur-carrier protein]-C-terminal Gly-Gly + 2 H(+)</text>
        <dbReference type="Rhea" id="RHEA:26333"/>
        <dbReference type="Rhea" id="RHEA-COMP:12202"/>
        <dbReference type="Rhea" id="RHEA-COMP:19907"/>
        <dbReference type="ChEBI" id="CHEBI:15377"/>
        <dbReference type="ChEBI" id="CHEBI:15378"/>
        <dbReference type="ChEBI" id="CHEBI:58698"/>
        <dbReference type="ChEBI" id="CHEBI:59648"/>
        <dbReference type="ChEBI" id="CHEBI:90778"/>
        <dbReference type="ChEBI" id="CHEBI:232372"/>
        <dbReference type="EC" id="2.8.1.12"/>
    </reaction>
</comment>
<comment type="pathway">
    <text>Cofactor biosynthesis; molybdopterin biosynthesis.</text>
</comment>
<comment type="subunit">
    <text evidence="1">Heterotetramer of 2 MoaD subunits and 2 MoaE subunits. Also stable as homodimer. The enzyme changes between these two forms during catalysis (By similarity).</text>
</comment>
<comment type="similarity">
    <text evidence="2">Belongs to the MoaE family.</text>
</comment>
<name>MOAE2_MYCTO</name>
<proteinExistence type="inferred from homology"/>
<evidence type="ECO:0000250" key="1"/>
<evidence type="ECO:0000305" key="2"/>
<reference key="1">
    <citation type="journal article" date="2002" name="J. Bacteriol.">
        <title>Whole-genome comparison of Mycobacterium tuberculosis clinical and laboratory strains.</title>
        <authorList>
            <person name="Fleischmann R.D."/>
            <person name="Alland D."/>
            <person name="Eisen J.A."/>
            <person name="Carpenter L."/>
            <person name="White O."/>
            <person name="Peterson J.D."/>
            <person name="DeBoy R.T."/>
            <person name="Dodson R.J."/>
            <person name="Gwinn M.L."/>
            <person name="Haft D.H."/>
            <person name="Hickey E.K."/>
            <person name="Kolonay J.F."/>
            <person name="Nelson W.C."/>
            <person name="Umayam L.A."/>
            <person name="Ermolaeva M.D."/>
            <person name="Salzberg S.L."/>
            <person name="Delcher A."/>
            <person name="Utterback T.R."/>
            <person name="Weidman J.F."/>
            <person name="Khouri H.M."/>
            <person name="Gill J."/>
            <person name="Mikula A."/>
            <person name="Bishai W."/>
            <person name="Jacobs W.R. Jr."/>
            <person name="Venter J.C."/>
            <person name="Fraser C.M."/>
        </authorList>
    </citation>
    <scope>NUCLEOTIDE SEQUENCE [LARGE SCALE GENOMIC DNA]</scope>
    <source>
        <strain>CDC 1551 / Oshkosh</strain>
    </source>
</reference>